<keyword id="KW-0963">Cytoplasm</keyword>
<keyword id="KW-0274">FAD</keyword>
<keyword id="KW-0285">Flavoprotein</keyword>
<keyword id="KW-0520">NAD</keyword>
<keyword id="KW-0521">NADP</keyword>
<keyword id="KW-0560">Oxidoreductase</keyword>
<protein>
    <recommendedName>
        <fullName evidence="1">Soluble pyridine nucleotide transhydrogenase</fullName>
        <shortName evidence="1">STH</shortName>
        <ecNumber evidence="1">1.6.1.1</ecNumber>
    </recommendedName>
    <alternativeName>
        <fullName evidence="1">NAD(P)(+) transhydrogenase [B-specific]</fullName>
    </alternativeName>
</protein>
<feature type="chain" id="PRO_1000204499" description="Soluble pyridine nucleotide transhydrogenase">
    <location>
        <begin position="1"/>
        <end position="468"/>
    </location>
</feature>
<feature type="binding site" evidence="1">
    <location>
        <begin position="36"/>
        <end position="45"/>
    </location>
    <ligand>
        <name>FAD</name>
        <dbReference type="ChEBI" id="CHEBI:57692"/>
    </ligand>
</feature>
<dbReference type="EC" id="1.6.1.1" evidence="1"/>
<dbReference type="EMBL" id="CP001277">
    <property type="protein sequence ID" value="ACQ67131.1"/>
    <property type="molecule type" value="Genomic_DNA"/>
</dbReference>
<dbReference type="RefSeq" id="WP_012738091.1">
    <property type="nucleotide sequence ID" value="NC_012751.1"/>
</dbReference>
<dbReference type="SMR" id="C4K3I8"/>
<dbReference type="STRING" id="572265.HDEF_0374"/>
<dbReference type="GeneID" id="66260284"/>
<dbReference type="KEGG" id="hde:HDEF_0374"/>
<dbReference type="eggNOG" id="COG1249">
    <property type="taxonomic scope" value="Bacteria"/>
</dbReference>
<dbReference type="HOGENOM" id="CLU_016755_0_0_6"/>
<dbReference type="Proteomes" id="UP000002334">
    <property type="component" value="Chromosome"/>
</dbReference>
<dbReference type="GO" id="GO:0005829">
    <property type="term" value="C:cytosol"/>
    <property type="evidence" value="ECO:0007669"/>
    <property type="project" value="TreeGrafter"/>
</dbReference>
<dbReference type="GO" id="GO:0004148">
    <property type="term" value="F:dihydrolipoyl dehydrogenase (NADH) activity"/>
    <property type="evidence" value="ECO:0007669"/>
    <property type="project" value="TreeGrafter"/>
</dbReference>
<dbReference type="GO" id="GO:0050660">
    <property type="term" value="F:flavin adenine dinucleotide binding"/>
    <property type="evidence" value="ECO:0007669"/>
    <property type="project" value="TreeGrafter"/>
</dbReference>
<dbReference type="GO" id="GO:0003957">
    <property type="term" value="F:NAD(P)+ transhydrogenase (Si-specific) activity"/>
    <property type="evidence" value="ECO:0007669"/>
    <property type="project" value="UniProtKB-UniRule"/>
</dbReference>
<dbReference type="GO" id="GO:0006103">
    <property type="term" value="P:2-oxoglutarate metabolic process"/>
    <property type="evidence" value="ECO:0007669"/>
    <property type="project" value="TreeGrafter"/>
</dbReference>
<dbReference type="GO" id="GO:0006739">
    <property type="term" value="P:NADP metabolic process"/>
    <property type="evidence" value="ECO:0007669"/>
    <property type="project" value="UniProtKB-UniRule"/>
</dbReference>
<dbReference type="FunFam" id="3.30.390.30:FF:000002">
    <property type="entry name" value="Soluble pyridine nucleotide transhydrogenase"/>
    <property type="match status" value="1"/>
</dbReference>
<dbReference type="FunFam" id="3.50.50.60:FF:000008">
    <property type="entry name" value="Soluble pyridine nucleotide transhydrogenase"/>
    <property type="match status" value="1"/>
</dbReference>
<dbReference type="Gene3D" id="3.30.390.30">
    <property type="match status" value="1"/>
</dbReference>
<dbReference type="Gene3D" id="3.50.50.60">
    <property type="entry name" value="FAD/NAD(P)-binding domain"/>
    <property type="match status" value="2"/>
</dbReference>
<dbReference type="HAMAP" id="MF_00247">
    <property type="entry name" value="SthA"/>
    <property type="match status" value="1"/>
</dbReference>
<dbReference type="InterPro" id="IPR050151">
    <property type="entry name" value="Class-I_Pyr_Nuc-Dis_Oxidored"/>
</dbReference>
<dbReference type="InterPro" id="IPR036188">
    <property type="entry name" value="FAD/NAD-bd_sf"/>
</dbReference>
<dbReference type="InterPro" id="IPR023753">
    <property type="entry name" value="FAD/NAD-binding_dom"/>
</dbReference>
<dbReference type="InterPro" id="IPR016156">
    <property type="entry name" value="FAD/NAD-linked_Rdtase_dimer_sf"/>
</dbReference>
<dbReference type="InterPro" id="IPR001100">
    <property type="entry name" value="Pyr_nuc-diS_OxRdtase"/>
</dbReference>
<dbReference type="InterPro" id="IPR004099">
    <property type="entry name" value="Pyr_nucl-diS_OxRdtase_dimer"/>
</dbReference>
<dbReference type="InterPro" id="IPR022962">
    <property type="entry name" value="STH_gammaproteobact"/>
</dbReference>
<dbReference type="NCBIfam" id="NF003585">
    <property type="entry name" value="PRK05249.1"/>
    <property type="match status" value="1"/>
</dbReference>
<dbReference type="PANTHER" id="PTHR22912">
    <property type="entry name" value="DISULFIDE OXIDOREDUCTASE"/>
    <property type="match status" value="1"/>
</dbReference>
<dbReference type="PANTHER" id="PTHR22912:SF93">
    <property type="entry name" value="SOLUBLE PYRIDINE NUCLEOTIDE TRANSHYDROGENASE"/>
    <property type="match status" value="1"/>
</dbReference>
<dbReference type="Pfam" id="PF07992">
    <property type="entry name" value="Pyr_redox_2"/>
    <property type="match status" value="1"/>
</dbReference>
<dbReference type="Pfam" id="PF02852">
    <property type="entry name" value="Pyr_redox_dim"/>
    <property type="match status" value="1"/>
</dbReference>
<dbReference type="PIRSF" id="PIRSF000350">
    <property type="entry name" value="Mercury_reductase_MerA"/>
    <property type="match status" value="1"/>
</dbReference>
<dbReference type="PRINTS" id="PR00368">
    <property type="entry name" value="FADPNR"/>
</dbReference>
<dbReference type="PRINTS" id="PR00411">
    <property type="entry name" value="PNDRDTASEI"/>
</dbReference>
<dbReference type="SUPFAM" id="SSF51905">
    <property type="entry name" value="FAD/NAD(P)-binding domain"/>
    <property type="match status" value="1"/>
</dbReference>
<dbReference type="SUPFAM" id="SSF55424">
    <property type="entry name" value="FAD/NAD-linked reductases, dimerisation (C-terminal) domain"/>
    <property type="match status" value="1"/>
</dbReference>
<accession>C4K3I8</accession>
<comment type="function">
    <text evidence="1">Conversion of NADPH, generated by peripheral catabolic pathways, to NADH, which can enter the respiratory chain for energy generation.</text>
</comment>
<comment type="catalytic activity">
    <reaction evidence="1">
        <text>NAD(+) + NADPH = NADH + NADP(+)</text>
        <dbReference type="Rhea" id="RHEA:11692"/>
        <dbReference type="ChEBI" id="CHEBI:57540"/>
        <dbReference type="ChEBI" id="CHEBI:57783"/>
        <dbReference type="ChEBI" id="CHEBI:57945"/>
        <dbReference type="ChEBI" id="CHEBI:58349"/>
        <dbReference type="EC" id="1.6.1.1"/>
    </reaction>
</comment>
<comment type="cofactor">
    <cofactor evidence="1">
        <name>FAD</name>
        <dbReference type="ChEBI" id="CHEBI:57692"/>
    </cofactor>
    <text evidence="1">Binds 1 FAD per subunit.</text>
</comment>
<comment type="subcellular location">
    <subcellularLocation>
        <location evidence="1">Cytoplasm</location>
    </subcellularLocation>
</comment>
<comment type="similarity">
    <text evidence="1">Belongs to the class-I pyridine nucleotide-disulfide oxidoreductase family.</text>
</comment>
<proteinExistence type="inferred from homology"/>
<gene>
    <name evidence="1" type="primary">sthA</name>
    <name evidence="1" type="synonym">udhA</name>
    <name type="ordered locus">HDEF_0374</name>
</gene>
<sequence>MKTHFNFDTVVIGSGPGGEGAAMGLAKKGQSVAVVERYKNVGGGCTHSGTIPSKALRHVISRIIEFNQNPLYSEHLQSIHPSFYHILQHANHVIRKQVSMRFDFYQRNHCHLFFGHARFIDPYKLEVIRPDGTLNTLSADHIVIATGSRPYHPESIDFTHPRIYDSDSILELKEEQQPKHIIIYGAGVIGCEYASIFRGLGVKVDLINTRNHLLAFLDQEISDALSYHFWNNGVVIRHNEEFDLIEGLDQGVVVHLKSGKKVKADCLFYANGRTGNTKELLLENIGLRTDERRFLQVSNLYQTALSHIYAVGDVIGYPSLASAAYDQGRIASQAITQGINSVRLIENIPTGIYTIPEISSVGKTEQELTDLKVPYEVGRAQFKHLARAQIAGMEAGSLKILFHRESKEILGIHCFGERAAEIIHIGQAIMEQKNGGNTIDYFVNTTFNYPTMAEAYRVAALNGLNRLF</sequence>
<reference key="1">
    <citation type="journal article" date="2009" name="Proc. Natl. Acad. Sci. U.S.A.">
        <title>Hamiltonella defensa, genome evolution of protective bacterial endosymbiont from pathogenic ancestors.</title>
        <authorList>
            <person name="Degnan P.H."/>
            <person name="Yu Y."/>
            <person name="Sisneros N."/>
            <person name="Wing R.A."/>
            <person name="Moran N.A."/>
        </authorList>
    </citation>
    <scope>NUCLEOTIDE SEQUENCE [LARGE SCALE GENOMIC DNA]</scope>
    <source>
        <strain>5AT</strain>
    </source>
</reference>
<organism>
    <name type="scientific">Hamiltonella defensa subsp. Acyrthosiphon pisum (strain 5AT)</name>
    <dbReference type="NCBI Taxonomy" id="572265"/>
    <lineage>
        <taxon>Bacteria</taxon>
        <taxon>Pseudomonadati</taxon>
        <taxon>Pseudomonadota</taxon>
        <taxon>Gammaproteobacteria</taxon>
        <taxon>Enterobacterales</taxon>
        <taxon>Enterobacteriaceae</taxon>
        <taxon>aphid secondary symbionts</taxon>
        <taxon>Candidatus Hamiltonella</taxon>
    </lineage>
</organism>
<evidence type="ECO:0000255" key="1">
    <source>
        <dbReference type="HAMAP-Rule" id="MF_00247"/>
    </source>
</evidence>
<name>STHA_HAMD5</name>